<protein>
    <recommendedName>
        <fullName evidence="5">FAD-dependent monooxygenase CTB5</fullName>
        <ecNumber evidence="1">1.-.-.-</ecNumber>
    </recommendedName>
    <alternativeName>
        <fullName evidence="5">Cercosporin toxin biosynthesis cluster protein 5</fullName>
    </alternativeName>
</protein>
<gene>
    <name evidence="5" type="primary">CTB5</name>
    <name type="ORF">CB0940_00835</name>
</gene>
<organism>
    <name type="scientific">Cercospora beticola</name>
    <name type="common">Sugarbeet leaf spot fungus</name>
    <dbReference type="NCBI Taxonomy" id="122368"/>
    <lineage>
        <taxon>Eukaryota</taxon>
        <taxon>Fungi</taxon>
        <taxon>Dikarya</taxon>
        <taxon>Ascomycota</taxon>
        <taxon>Pezizomycotina</taxon>
        <taxon>Dothideomycetes</taxon>
        <taxon>Dothideomycetidae</taxon>
        <taxon>Mycosphaerellales</taxon>
        <taxon>Mycosphaerellaceae</taxon>
        <taxon>Cercospora</taxon>
    </lineage>
</organism>
<evidence type="ECO:0000250" key="1">
    <source>
        <dbReference type="UniProtKB" id="A0ST43"/>
    </source>
</evidence>
<evidence type="ECO:0000250" key="2">
    <source>
        <dbReference type="UniProtKB" id="Q0UHZ9"/>
    </source>
</evidence>
<evidence type="ECO:0000255" key="3">
    <source>
        <dbReference type="PROSITE-ProRule" id="PRU00718"/>
    </source>
</evidence>
<evidence type="ECO:0000303" key="4">
    <source>
    </source>
</evidence>
<evidence type="ECO:0000303" key="5">
    <source>
    </source>
</evidence>
<evidence type="ECO:0000305" key="6"/>
<dbReference type="EC" id="1.-.-.-" evidence="1"/>
<dbReference type="EMBL" id="LKMD01000100">
    <property type="protein sequence ID" value="PIB02399.1"/>
    <property type="molecule type" value="Genomic_DNA"/>
</dbReference>
<dbReference type="RefSeq" id="XP_023460059.1">
    <property type="nucleotide sequence ID" value="XM_023593477.1"/>
</dbReference>
<dbReference type="SMR" id="A0A2G5ICA0"/>
<dbReference type="GeneID" id="35424647"/>
<dbReference type="OrthoDB" id="2151789at2759"/>
<dbReference type="Proteomes" id="UP000230605">
    <property type="component" value="Chromosome 1"/>
</dbReference>
<dbReference type="GO" id="GO:0071949">
    <property type="term" value="F:FAD binding"/>
    <property type="evidence" value="ECO:0007669"/>
    <property type="project" value="InterPro"/>
</dbReference>
<dbReference type="GO" id="GO:0016491">
    <property type="term" value="F:oxidoreductase activity"/>
    <property type="evidence" value="ECO:0007669"/>
    <property type="project" value="UniProtKB-KW"/>
</dbReference>
<dbReference type="Gene3D" id="3.30.465.10">
    <property type="match status" value="1"/>
</dbReference>
<dbReference type="InterPro" id="IPR016166">
    <property type="entry name" value="FAD-bd_PCMH"/>
</dbReference>
<dbReference type="InterPro" id="IPR036318">
    <property type="entry name" value="FAD-bd_PCMH-like_sf"/>
</dbReference>
<dbReference type="InterPro" id="IPR016169">
    <property type="entry name" value="FAD-bd_PCMH_sub2"/>
</dbReference>
<dbReference type="InterPro" id="IPR050416">
    <property type="entry name" value="FAD-linked_Oxidoreductase"/>
</dbReference>
<dbReference type="InterPro" id="IPR006094">
    <property type="entry name" value="Oxid_FAD_bind_N"/>
</dbReference>
<dbReference type="PANTHER" id="PTHR42973">
    <property type="entry name" value="BINDING OXIDOREDUCTASE, PUTATIVE (AFU_ORTHOLOGUE AFUA_1G17690)-RELATED"/>
    <property type="match status" value="1"/>
</dbReference>
<dbReference type="PANTHER" id="PTHR42973:SF22">
    <property type="entry name" value="FAD-BINDING PCMH-TYPE DOMAIN-CONTAINING PROTEIN-RELATED"/>
    <property type="match status" value="1"/>
</dbReference>
<dbReference type="Pfam" id="PF01565">
    <property type="entry name" value="FAD_binding_4"/>
    <property type="match status" value="1"/>
</dbReference>
<dbReference type="SUPFAM" id="SSF56176">
    <property type="entry name" value="FAD-binding/transporter-associated domain-like"/>
    <property type="match status" value="1"/>
</dbReference>
<dbReference type="PROSITE" id="PS51387">
    <property type="entry name" value="FAD_PCMH"/>
    <property type="match status" value="1"/>
</dbReference>
<proteinExistence type="inferred from homology"/>
<reference key="1">
    <citation type="journal article" date="2018" name="Proc. Natl. Acad. Sci. U.S.A.">
        <title>Gene cluster conservation provides insight into cercosporin biosynthesis and extends production to the genus Colletotrichum.</title>
        <authorList>
            <person name="de Jonge R."/>
            <person name="Ebert M.K."/>
            <person name="Huitt-Roehl C.R."/>
            <person name="Pal P."/>
            <person name="Suttle J.C."/>
            <person name="Spanner R.E."/>
            <person name="Neubauer J.D."/>
            <person name="Jurick W.M. II"/>
            <person name="Stott K.A."/>
            <person name="Secor G.A."/>
            <person name="Thomma B.P.H.J."/>
            <person name="Van de Peer Y."/>
            <person name="Townsend C.A."/>
            <person name="Bolton M.D."/>
        </authorList>
    </citation>
    <scope>NUCLEOTIDE SEQUENCE [LARGE SCALE GENOMIC DNA]</scope>
    <scope>FUNCTION</scope>
    <scope>PATHWAY</scope>
    <source>
        <strain>09-40</strain>
    </source>
</reference>
<reference key="2">
    <citation type="journal article" date="2000" name="Annu. Rev. Phytopathol.">
        <title>The photoactivated cercospora toxin cercosporin: contributions to plant disease and fundamental biology.</title>
        <authorList>
            <person name="Daub M.E."/>
            <person name="Ehrenshaft M."/>
        </authorList>
    </citation>
    <scope>REVIEW ON CERCOSPORIN</scope>
</reference>
<comment type="function">
    <text evidence="1 2 4">FAD-dependent monooxygenase; part of the gene cluster that mediates the biosynthesis of cercosporin, a light-activated, non-host-selective toxin (By similarity). The perylenequinone chromophore of cercosporin absorbs light energy to attain an electronically-activated triplet state and produces active oxygen species such as the hydroxyl radical, superoxide, hydrogen peroxide or singlet oxygen upon reaction with oxygen molecules (PubMed:11701851). These reactive oxygen species cause damage to various cellular components including lipids, proteins and nucleic acids (PubMed:11701851). The first step of cercosporin biosynthesis is performed by the polyketide synthase CTB1 which catalyzes the formation of nor-toralactone (By similarity). The starter unit acyltransferase (SAT) domain of CTB1 initiates polyketide extension by the selective utilization of acetyl-CoA, which is elongated to the heptaketide in the beta-ketoacyl synthase (KS) domain by successive condensations with six malonyl units introduced by the malonyl acyltransferase (MAT) domain. The product template (PT) domain catalyzes C4-C9 and C2-C11 aldol cyclizations and dehydrations to a trihydroxynaphthalene, which is thought to be delivered to the thioesterase (TE) domain for product release (By similarity). The bifunctional enzyme CTB3 then methylates nor-toralactone to toralactone before conducting an unusual oxidative aromatic ring opening (By similarity). The O-methyltransferase CTB2 further methylates the nascent OH-6 of the CBT3 product, blocking further oxidation at this site before the reductase CTB6 reduces the 2-oxopropyl ketone at position C7, giving naphthalene (By similarity). The FAD-dependent monooxygenase CTB5 in concert with the multicopper oxidase CTB12 are responsible for homodimerization of naphthalene with CTB7 installing the dioxepine moiety, finally producing cercosporin (By similarity). The fasciclin domain-containing protein CTB11 might act with CTB5 and CTB12 whereas the roles of CTB9 and CTB10 have still to be elucidated (By similarity).</text>
</comment>
<comment type="pathway">
    <text evidence="1">Mycotoxin biosynthesis.</text>
</comment>
<comment type="similarity">
    <text evidence="6">Belongs to the oxygen-dependent FAD-linked oxidoreductase family.</text>
</comment>
<keyword id="KW-0274">FAD</keyword>
<keyword id="KW-0285">Flavoprotein</keyword>
<keyword id="KW-0560">Oxidoreductase</keyword>
<name>CTB5_CERBT</name>
<feature type="chain" id="PRO_0000449869" description="FAD-dependent monooxygenase CTB5">
    <location>
        <begin position="1"/>
        <end position="527"/>
    </location>
</feature>
<feature type="domain" description="FAD-binding PCMH-type" evidence="3">
    <location>
        <begin position="78"/>
        <end position="255"/>
    </location>
</feature>
<accession>A0A2G5ICA0</accession>
<sequence>MLGLNLQQVLSNVPTISSIVSGVGSYQHGSDSSAWASVAASKSCCDALTKSLGKNSVVFPYDAAYSQSMGSYFSLKNSDLHPSCIALPRSAEDVSKAVRTLSLGAHKWEGQCQFGVRGGGHTPFKGAASTDNGIVLDLLHMPSAGISPDYETITVSPSTTWDLVYEVLDAHNRSTLGTKVAGIGVGGASTSCGVSYFSPRYGYICDMVENWEVVLATGDIVNANANENPDLWKALRGGINNFGIVTAVTLKTFGQGPFWGGQTFHSIDTRQEHFKNHEKLASAHPYDPYAHYINTLVWANGGHWFIGNSIQYTKSDPPVAEPEVFKPFLKTERTPIFPGLPEDTLRVDNVTSFSREYAANTLYPQRWQFACISFAPDADFMETFFQMANDAMQQYVKLAGFKLILNYQPAPTVQLERNGAVDSLGPIQTEGNVVFVHWAVSYDESEAQFDDAITKSVQDLFHAANAKAKELGIYRHFIQPTYADSWQSPFDYRSKSTIEELVATSKKYDPLQVFQKQVPGGFKLPQI</sequence>